<gene>
    <name type="ORF">ATEG_07810</name>
</gene>
<protein>
    <recommendedName>
        <fullName>Probable cutinase 2</fullName>
        <ecNumber evidence="5 6">3.1.1.74</ecNumber>
    </recommendedName>
    <alternativeName>
        <fullName>Cutin hydrolase 2</fullName>
    </alternativeName>
</protein>
<reference key="1">
    <citation type="submission" date="2005-09" db="EMBL/GenBank/DDBJ databases">
        <title>Annotation of the Aspergillus terreus NIH2624 genome.</title>
        <authorList>
            <person name="Birren B.W."/>
            <person name="Lander E.S."/>
            <person name="Galagan J.E."/>
            <person name="Nusbaum C."/>
            <person name="Devon K."/>
            <person name="Henn M."/>
            <person name="Ma L.-J."/>
            <person name="Jaffe D.B."/>
            <person name="Butler J."/>
            <person name="Alvarez P."/>
            <person name="Gnerre S."/>
            <person name="Grabherr M."/>
            <person name="Kleber M."/>
            <person name="Mauceli E.W."/>
            <person name="Brockman W."/>
            <person name="Rounsley S."/>
            <person name="Young S.K."/>
            <person name="LaButti K."/>
            <person name="Pushparaj V."/>
            <person name="DeCaprio D."/>
            <person name="Crawford M."/>
            <person name="Koehrsen M."/>
            <person name="Engels R."/>
            <person name="Montgomery P."/>
            <person name="Pearson M."/>
            <person name="Howarth C."/>
            <person name="Larson L."/>
            <person name="Luoma S."/>
            <person name="White J."/>
            <person name="Alvarado L."/>
            <person name="Kodira C.D."/>
            <person name="Zeng Q."/>
            <person name="Oleary S."/>
            <person name="Yandava C."/>
            <person name="Denning D.W."/>
            <person name="Nierman W.C."/>
            <person name="Milne T."/>
            <person name="Madden K."/>
        </authorList>
    </citation>
    <scope>NUCLEOTIDE SEQUENCE [LARGE SCALE GENOMIC DNA]</scope>
    <source>
        <strain>NIH 2624 / FGSC A1156</strain>
    </source>
</reference>
<dbReference type="EC" id="3.1.1.74" evidence="5 6"/>
<dbReference type="EMBL" id="CH476604">
    <property type="protein sequence ID" value="EAU32072.1"/>
    <property type="molecule type" value="Genomic_DNA"/>
</dbReference>
<dbReference type="RefSeq" id="XP_001216431.1">
    <property type="nucleotide sequence ID" value="XM_001216431.1"/>
</dbReference>
<dbReference type="SMR" id="Q0CES4"/>
<dbReference type="STRING" id="341663.Q0CES4"/>
<dbReference type="ESTHER" id="asptn-cuti2">
    <property type="family name" value="Cutinase"/>
</dbReference>
<dbReference type="EnsemblFungi" id="EAU32072">
    <property type="protein sequence ID" value="EAU32072"/>
    <property type="gene ID" value="ATEG_07810"/>
</dbReference>
<dbReference type="GeneID" id="4322671"/>
<dbReference type="VEuPathDB" id="FungiDB:ATEG_07810"/>
<dbReference type="eggNOG" id="ENOG502SI38">
    <property type="taxonomic scope" value="Eukaryota"/>
</dbReference>
<dbReference type="HOGENOM" id="CLU_040058_2_0_1"/>
<dbReference type="OMA" id="KIFCLPT"/>
<dbReference type="OrthoDB" id="3225429at2759"/>
<dbReference type="Proteomes" id="UP000007963">
    <property type="component" value="Unassembled WGS sequence"/>
</dbReference>
<dbReference type="GO" id="GO:0005576">
    <property type="term" value="C:extracellular region"/>
    <property type="evidence" value="ECO:0007669"/>
    <property type="project" value="UniProtKB-SubCell"/>
</dbReference>
<dbReference type="GO" id="GO:0050525">
    <property type="term" value="F:cutinase activity"/>
    <property type="evidence" value="ECO:0000250"/>
    <property type="project" value="UniProtKB"/>
</dbReference>
<dbReference type="GO" id="GO:0016052">
    <property type="term" value="P:carbohydrate catabolic process"/>
    <property type="evidence" value="ECO:0007669"/>
    <property type="project" value="TreeGrafter"/>
</dbReference>
<dbReference type="FunFam" id="3.40.50.1820:FF:000235">
    <property type="entry name" value="Cutinase 1"/>
    <property type="match status" value="1"/>
</dbReference>
<dbReference type="Gene3D" id="3.40.50.1820">
    <property type="entry name" value="alpha/beta hydrolase"/>
    <property type="match status" value="1"/>
</dbReference>
<dbReference type="InterPro" id="IPR029058">
    <property type="entry name" value="AB_hydrolase_fold"/>
</dbReference>
<dbReference type="InterPro" id="IPR000675">
    <property type="entry name" value="Cutinase/axe"/>
</dbReference>
<dbReference type="InterPro" id="IPR043580">
    <property type="entry name" value="CUTINASE_1"/>
</dbReference>
<dbReference type="InterPro" id="IPR043579">
    <property type="entry name" value="CUTINASE_2"/>
</dbReference>
<dbReference type="InterPro" id="IPR011150">
    <property type="entry name" value="Cutinase_monf"/>
</dbReference>
<dbReference type="PANTHER" id="PTHR48250:SF3">
    <property type="entry name" value="CUTINASE 1-RELATED"/>
    <property type="match status" value="1"/>
</dbReference>
<dbReference type="PANTHER" id="PTHR48250">
    <property type="entry name" value="CUTINASE 2-RELATED"/>
    <property type="match status" value="1"/>
</dbReference>
<dbReference type="Pfam" id="PF01083">
    <property type="entry name" value="Cutinase"/>
    <property type="match status" value="1"/>
</dbReference>
<dbReference type="PRINTS" id="PR00129">
    <property type="entry name" value="CUTINASE"/>
</dbReference>
<dbReference type="SMART" id="SM01110">
    <property type="entry name" value="Cutinase"/>
    <property type="match status" value="1"/>
</dbReference>
<dbReference type="SUPFAM" id="SSF53474">
    <property type="entry name" value="alpha/beta-Hydrolases"/>
    <property type="match status" value="1"/>
</dbReference>
<dbReference type="PROSITE" id="PS00155">
    <property type="entry name" value="CUTINASE_1"/>
    <property type="match status" value="1"/>
</dbReference>
<dbReference type="PROSITE" id="PS00931">
    <property type="entry name" value="CUTINASE_2"/>
    <property type="match status" value="1"/>
</dbReference>
<keyword id="KW-1015">Disulfide bond</keyword>
<keyword id="KW-0378">Hydrolase</keyword>
<keyword id="KW-1185">Reference proteome</keyword>
<keyword id="KW-0964">Secreted</keyword>
<keyword id="KW-0719">Serine esterase</keyword>
<keyword id="KW-0732">Signal</keyword>
<comment type="function">
    <text evidence="1">Catalyzes the hydrolysis of complex carboxylic polyesters found in the cell wall of plants (By similarity). Degrades cutin, a macromolecule that forms the structure of the plant cuticle (By similarity).</text>
</comment>
<comment type="catalytic activity">
    <reaction evidence="5 6">
        <text>cutin + H2O = cutin monomers.</text>
        <dbReference type="EC" id="3.1.1.74"/>
    </reaction>
</comment>
<comment type="subcellular location">
    <subcellularLocation>
        <location evidence="2">Secreted</location>
    </subcellularLocation>
</comment>
<comment type="similarity">
    <text evidence="7">Belongs to the cutinase family.</text>
</comment>
<accession>Q0CES4</accession>
<sequence>MNYKLLTLALASLAAANPIERQRKIHPAVLSGGDELRNGDCQPVTFIFARASTEQGLLGGSTGPALCNRLKSALDGVACQGVGPKYQATLAANALPKGTSDEAIEEAQSLFQLAAEKCPDTQIVAGGYSQGTAVMHGAIPGLDDALKDKIKGVVLFGDTRNQQDNGQIPDFPKDKIKIYCAAGDMVCYGTLIVAAPHFSYIADVPDAADFLVSKLE</sequence>
<organism>
    <name type="scientific">Aspergillus terreus (strain NIH 2624 / FGSC A1156)</name>
    <dbReference type="NCBI Taxonomy" id="341663"/>
    <lineage>
        <taxon>Eukaryota</taxon>
        <taxon>Fungi</taxon>
        <taxon>Dikarya</taxon>
        <taxon>Ascomycota</taxon>
        <taxon>Pezizomycotina</taxon>
        <taxon>Eurotiomycetes</taxon>
        <taxon>Eurotiomycetidae</taxon>
        <taxon>Eurotiales</taxon>
        <taxon>Aspergillaceae</taxon>
        <taxon>Aspergillus</taxon>
        <taxon>Aspergillus subgen. Circumdati</taxon>
    </lineage>
</organism>
<feature type="signal peptide" evidence="4">
    <location>
        <begin position="1"/>
        <end position="16"/>
    </location>
</feature>
<feature type="chain" id="PRO_0000395256" description="Probable cutinase 2">
    <location>
        <begin position="17"/>
        <end position="216"/>
    </location>
</feature>
<feature type="active site" description="Nucleophile" evidence="1">
    <location>
        <position position="129"/>
    </location>
</feature>
<feature type="active site" evidence="1">
    <location>
        <position position="184"/>
    </location>
</feature>
<feature type="active site" description="Proton donor/acceptor" evidence="1">
    <location>
        <position position="197"/>
    </location>
</feature>
<feature type="site" description="Transition state stabilizer" evidence="1">
    <location>
        <position position="52"/>
    </location>
</feature>
<feature type="site" description="Transition state stabilizer" evidence="1">
    <location>
        <position position="130"/>
    </location>
</feature>
<feature type="disulfide bond" evidence="3">
    <location>
        <begin position="41"/>
        <end position="118"/>
    </location>
</feature>
<feature type="disulfide bond" evidence="3">
    <location>
        <begin position="67"/>
        <end position="79"/>
    </location>
</feature>
<feature type="disulfide bond" evidence="3">
    <location>
        <begin position="180"/>
        <end position="187"/>
    </location>
</feature>
<evidence type="ECO:0000250" key="1">
    <source>
        <dbReference type="UniProtKB" id="P00590"/>
    </source>
</evidence>
<evidence type="ECO:0000250" key="2">
    <source>
        <dbReference type="UniProtKB" id="P11373"/>
    </source>
</evidence>
<evidence type="ECO:0000250" key="3">
    <source>
        <dbReference type="UniProtKB" id="P52956"/>
    </source>
</evidence>
<evidence type="ECO:0000255" key="4"/>
<evidence type="ECO:0000255" key="5">
    <source>
        <dbReference type="PROSITE-ProRule" id="PRU10108"/>
    </source>
</evidence>
<evidence type="ECO:0000255" key="6">
    <source>
        <dbReference type="PROSITE-ProRule" id="PRU10109"/>
    </source>
</evidence>
<evidence type="ECO:0000305" key="7"/>
<name>CUTI2_ASPTN</name>
<proteinExistence type="inferred from homology"/>